<gene>
    <name type="primary">mdtO</name>
    <name type="ordered locus">SF4141</name>
    <name type="ordered locus">S2587</name>
</gene>
<accession>Q83IQ8</accession>
<accession>Q7UBB8</accession>
<organism>
    <name type="scientific">Shigella flexneri</name>
    <dbReference type="NCBI Taxonomy" id="623"/>
    <lineage>
        <taxon>Bacteria</taxon>
        <taxon>Pseudomonadati</taxon>
        <taxon>Pseudomonadota</taxon>
        <taxon>Gammaproteobacteria</taxon>
        <taxon>Enterobacterales</taxon>
        <taxon>Enterobacteriaceae</taxon>
        <taxon>Shigella</taxon>
    </lineage>
</organism>
<evidence type="ECO:0000250" key="1"/>
<evidence type="ECO:0000255" key="2"/>
<evidence type="ECO:0000305" key="3"/>
<proteinExistence type="inferred from homology"/>
<sequence length="680" mass="75903">MSALNSLPLPVVRLLAFFHEELSERRPGRVPQIVQLWVGCLLVILISMTFEIPFVALSLAVLFYGIQSNAFYTKFVAILFVVATVLEIGSLFLIYKWSYGEPLIRLIIAGPILMGCMFLMRTHRLGLVFFAVAIYGQTFPAMLDYPEVVVRLTLWCIVVGLYPTLLMTLIGVLWFPNRAITQMHQALNDRLDDAISHLTDSLAPLPETRIEREALALQKLNVFCLADDANWRTQSAWWQSCVATVTYIYSTLNRYDPTSFADSQAIIEFRQKLASEINKLQHAVAEGQCWQSDWRLSESEAVAARECNLENICQTLLQLGQMNPNTPPTPAAKPPSMVADAFTNPDYIRYAVKTLLACLICYTFYSGVDWEGIHTCMLTCVIVANPNVGSSYQKMVLRFGGAFCGAILALLFTLLVMPWLDNIVELLFVLAPIFLLGAWIATSSERSSYIGTQMVVTFALATLENVFGPVYDLVEIRDRALGIIIGTVVSAMIYTFVWPESEARTLPQKLAGALGMLSKVMRIPRQQEVTALRTYLQIRIGLHAAFNACEEMCQRVALERQLDSEERALLIERSQTVIRQGRDILHAWDATWNSAQALDNALQPDRAGQFADALEKYAAGLATALSRSPQITLEETPTSQAILPTLLKQEQHVCQLFARLPDWTAPALTPATEQAQGATQ</sequence>
<protein>
    <recommendedName>
        <fullName>Multidrug resistance protein MdtO</fullName>
    </recommendedName>
</protein>
<name>MDTO_SHIFL</name>
<reference key="1">
    <citation type="journal article" date="2002" name="Nucleic Acids Res.">
        <title>Genome sequence of Shigella flexneri 2a: insights into pathogenicity through comparison with genomes of Escherichia coli K12 and O157.</title>
        <authorList>
            <person name="Jin Q."/>
            <person name="Yuan Z."/>
            <person name="Xu J."/>
            <person name="Wang Y."/>
            <person name="Shen Y."/>
            <person name="Lu W."/>
            <person name="Wang J."/>
            <person name="Liu H."/>
            <person name="Yang J."/>
            <person name="Yang F."/>
            <person name="Zhang X."/>
            <person name="Zhang J."/>
            <person name="Yang G."/>
            <person name="Wu H."/>
            <person name="Qu D."/>
            <person name="Dong J."/>
            <person name="Sun L."/>
            <person name="Xue Y."/>
            <person name="Zhao A."/>
            <person name="Gao Y."/>
            <person name="Zhu J."/>
            <person name="Kan B."/>
            <person name="Ding K."/>
            <person name="Chen S."/>
            <person name="Cheng H."/>
            <person name="Yao Z."/>
            <person name="He B."/>
            <person name="Chen R."/>
            <person name="Ma D."/>
            <person name="Qiang B."/>
            <person name="Wen Y."/>
            <person name="Hou Y."/>
            <person name="Yu J."/>
        </authorList>
    </citation>
    <scope>NUCLEOTIDE SEQUENCE [LARGE SCALE GENOMIC DNA]</scope>
    <source>
        <strain>301 / Serotype 2a</strain>
    </source>
</reference>
<reference key="2">
    <citation type="journal article" date="2003" name="Infect. Immun.">
        <title>Complete genome sequence and comparative genomics of Shigella flexneri serotype 2a strain 2457T.</title>
        <authorList>
            <person name="Wei J."/>
            <person name="Goldberg M.B."/>
            <person name="Burland V."/>
            <person name="Venkatesan M.M."/>
            <person name="Deng W."/>
            <person name="Fournier G."/>
            <person name="Mayhew G.F."/>
            <person name="Plunkett G. III"/>
            <person name="Rose D.J."/>
            <person name="Darling A."/>
            <person name="Mau B."/>
            <person name="Perna N.T."/>
            <person name="Payne S.M."/>
            <person name="Runyen-Janecky L.J."/>
            <person name="Zhou S."/>
            <person name="Schwartz D.C."/>
            <person name="Blattner F.R."/>
        </authorList>
    </citation>
    <scope>NUCLEOTIDE SEQUENCE [LARGE SCALE GENOMIC DNA]</scope>
    <source>
        <strain>ATCC 700930 / 2457T / Serotype 2a</strain>
    </source>
</reference>
<keyword id="KW-0046">Antibiotic resistance</keyword>
<keyword id="KW-0997">Cell inner membrane</keyword>
<keyword id="KW-1003">Cell membrane</keyword>
<keyword id="KW-0472">Membrane</keyword>
<keyword id="KW-1185">Reference proteome</keyword>
<keyword id="KW-0812">Transmembrane</keyword>
<keyword id="KW-1133">Transmembrane helix</keyword>
<keyword id="KW-0813">Transport</keyword>
<feature type="chain" id="PRO_0000210092" description="Multidrug resistance protein MdtO">
    <location>
        <begin position="1"/>
        <end position="680"/>
    </location>
</feature>
<feature type="transmembrane region" description="Helical" evidence="2">
    <location>
        <begin position="43"/>
        <end position="63"/>
    </location>
</feature>
<feature type="transmembrane region" description="Helical" evidence="2">
    <location>
        <begin position="75"/>
        <end position="95"/>
    </location>
</feature>
<feature type="transmembrane region" description="Helical" evidence="2">
    <location>
        <begin position="100"/>
        <end position="120"/>
    </location>
</feature>
<feature type="transmembrane region" description="Helical" evidence="2">
    <location>
        <begin position="125"/>
        <end position="145"/>
    </location>
</feature>
<feature type="transmembrane region" description="Helical" evidence="2">
    <location>
        <begin position="155"/>
        <end position="175"/>
    </location>
</feature>
<feature type="transmembrane region" description="Helical" evidence="2">
    <location>
        <begin position="399"/>
        <end position="419"/>
    </location>
</feature>
<feature type="transmembrane region" description="Helical" evidence="2">
    <location>
        <begin position="423"/>
        <end position="443"/>
    </location>
</feature>
<feature type="transmembrane region" description="Helical" evidence="2">
    <location>
        <begin position="454"/>
        <end position="474"/>
    </location>
</feature>
<feature type="transmembrane region" description="Helical" evidence="2">
    <location>
        <begin position="480"/>
        <end position="500"/>
    </location>
</feature>
<comment type="function">
    <text evidence="1">Could be involved in resistance to puromycin, acriflavine and tetraphenylarsonium chloride.</text>
</comment>
<comment type="subunit">
    <text evidence="1">Could be part of a tripartite efflux system composed of MdtN, MdtO and MdtP.</text>
</comment>
<comment type="subcellular location">
    <subcellularLocation>
        <location evidence="1">Cell inner membrane</location>
        <topology evidence="1">Multi-pass membrane protein</topology>
    </subcellularLocation>
</comment>
<comment type="similarity">
    <text evidence="3">Belongs to the MdtO family.</text>
</comment>
<comment type="sequence caution" evidence="3">
    <conflict type="erroneous initiation">
        <sequence resource="EMBL-CDS" id="AAN45563"/>
    </conflict>
</comment>
<comment type="sequence caution" evidence="3">
    <conflict type="erroneous initiation">
        <sequence resource="EMBL-CDS" id="AAP18651"/>
    </conflict>
</comment>
<dbReference type="EMBL" id="AE005674">
    <property type="protein sequence ID" value="AAN45563.2"/>
    <property type="status" value="ALT_INIT"/>
    <property type="molecule type" value="Genomic_DNA"/>
</dbReference>
<dbReference type="EMBL" id="AE014073">
    <property type="protein sequence ID" value="AAP18651.1"/>
    <property type="status" value="ALT_INIT"/>
    <property type="molecule type" value="Genomic_DNA"/>
</dbReference>
<dbReference type="RefSeq" id="WP_001275151.1">
    <property type="nucleotide sequence ID" value="NZ_WPGU01000069.1"/>
</dbReference>
<dbReference type="STRING" id="198214.SF4141"/>
<dbReference type="PaxDb" id="198214-SF4141"/>
<dbReference type="KEGG" id="sfl:SF4141"/>
<dbReference type="KEGG" id="sfx:S2587"/>
<dbReference type="PATRIC" id="fig|198214.7.peg.4888"/>
<dbReference type="HOGENOM" id="CLU_023392_1_0_6"/>
<dbReference type="Proteomes" id="UP000001006">
    <property type="component" value="Chromosome"/>
</dbReference>
<dbReference type="Proteomes" id="UP000002673">
    <property type="component" value="Chromosome"/>
</dbReference>
<dbReference type="GO" id="GO:0005886">
    <property type="term" value="C:plasma membrane"/>
    <property type="evidence" value="ECO:0007669"/>
    <property type="project" value="UniProtKB-SubCell"/>
</dbReference>
<dbReference type="GO" id="GO:0022857">
    <property type="term" value="F:transmembrane transporter activity"/>
    <property type="evidence" value="ECO:0007669"/>
    <property type="project" value="InterPro"/>
</dbReference>
<dbReference type="GO" id="GO:0046677">
    <property type="term" value="P:response to antibiotic"/>
    <property type="evidence" value="ECO:0007669"/>
    <property type="project" value="UniProtKB-KW"/>
</dbReference>
<dbReference type="InterPro" id="IPR006726">
    <property type="entry name" value="PHBA_efflux_AaeB/fusaric-R"/>
</dbReference>
<dbReference type="NCBIfam" id="NF008510">
    <property type="entry name" value="PRK11427.1"/>
    <property type="match status" value="1"/>
</dbReference>
<dbReference type="PANTHER" id="PTHR30509:SF9">
    <property type="entry name" value="MULTIDRUG RESISTANCE PROTEIN MDTO"/>
    <property type="match status" value="1"/>
</dbReference>
<dbReference type="PANTHER" id="PTHR30509">
    <property type="entry name" value="P-HYDROXYBENZOIC ACID EFFLUX PUMP SUBUNIT-RELATED"/>
    <property type="match status" value="1"/>
</dbReference>
<dbReference type="Pfam" id="PF04632">
    <property type="entry name" value="FUSC"/>
    <property type="match status" value="1"/>
</dbReference>